<feature type="chain" id="PRO_0000214369" description="UPF0114 protein YqhA">
    <location>
        <begin position="1"/>
        <end position="164"/>
    </location>
</feature>
<feature type="transmembrane region" description="Helical" evidence="1">
    <location>
        <begin position="15"/>
        <end position="35"/>
    </location>
</feature>
<feature type="transmembrane region" description="Helical" evidence="1">
    <location>
        <begin position="53"/>
        <end position="73"/>
    </location>
</feature>
<feature type="transmembrane region" description="Helical" evidence="1">
    <location>
        <begin position="136"/>
        <end position="156"/>
    </location>
</feature>
<proteinExistence type="inferred from homology"/>
<organism>
    <name type="scientific">Escherichia coli O6:H1 (strain CFT073 / ATCC 700928 / UPEC)</name>
    <dbReference type="NCBI Taxonomy" id="199310"/>
    <lineage>
        <taxon>Bacteria</taxon>
        <taxon>Pseudomonadati</taxon>
        <taxon>Pseudomonadota</taxon>
        <taxon>Gammaproteobacteria</taxon>
        <taxon>Enterobacterales</taxon>
        <taxon>Enterobacteriaceae</taxon>
        <taxon>Escherichia</taxon>
    </lineage>
</organism>
<gene>
    <name evidence="1" type="primary">yqhA</name>
    <name type="ordered locus">c3738</name>
</gene>
<sequence length="164" mass="18655">MERFLENAMYASRWLLAPVYFGLSLALIALALKFFQEIIHVLPNIFSMAESDLILVLLSLVDMTLVGGLLVMVMFSGYENFVSQLDISENKEKLNWLGKMDATSLKNKVAASIVAISSIHLLRVFMDAKNVPDNKLMWYVIIHLTFVLSAFVMGYLDRLTRHNH</sequence>
<name>YQHA_ECOL6</name>
<reference key="1">
    <citation type="journal article" date="2002" name="Proc. Natl. Acad. Sci. U.S.A.">
        <title>Extensive mosaic structure revealed by the complete genome sequence of uropathogenic Escherichia coli.</title>
        <authorList>
            <person name="Welch R.A."/>
            <person name="Burland V."/>
            <person name="Plunkett G. III"/>
            <person name="Redford P."/>
            <person name="Roesch P."/>
            <person name="Rasko D."/>
            <person name="Buckles E.L."/>
            <person name="Liou S.-R."/>
            <person name="Boutin A."/>
            <person name="Hackett J."/>
            <person name="Stroud D."/>
            <person name="Mayhew G.F."/>
            <person name="Rose D.J."/>
            <person name="Zhou S."/>
            <person name="Schwartz D.C."/>
            <person name="Perna N.T."/>
            <person name="Mobley H.L.T."/>
            <person name="Donnenberg M.S."/>
            <person name="Blattner F.R."/>
        </authorList>
    </citation>
    <scope>NUCLEOTIDE SEQUENCE [LARGE SCALE GENOMIC DNA]</scope>
    <source>
        <strain>CFT073 / ATCC 700928 / UPEC</strain>
    </source>
</reference>
<comment type="subcellular location">
    <subcellularLocation>
        <location evidence="1">Cell membrane</location>
        <topology evidence="1">Multi-pass membrane protein</topology>
    </subcellularLocation>
</comment>
<comment type="similarity">
    <text evidence="1">Belongs to the UPF0114 family.</text>
</comment>
<comment type="sequence caution" evidence="2">
    <conflict type="erroneous initiation">
        <sequence resource="EMBL-CDS" id="AAN82182"/>
    </conflict>
</comment>
<keyword id="KW-1003">Cell membrane</keyword>
<keyword id="KW-0472">Membrane</keyword>
<keyword id="KW-1185">Reference proteome</keyword>
<keyword id="KW-0812">Transmembrane</keyword>
<keyword id="KW-1133">Transmembrane helix</keyword>
<dbReference type="EMBL" id="AE014075">
    <property type="protein sequence ID" value="AAN82182.1"/>
    <property type="status" value="ALT_INIT"/>
    <property type="molecule type" value="Genomic_DNA"/>
</dbReference>
<dbReference type="RefSeq" id="WP_001332910.1">
    <property type="nucleotide sequence ID" value="NZ_CP051263.1"/>
</dbReference>
<dbReference type="KEGG" id="ecc:c3738"/>
<dbReference type="eggNOG" id="COG2862">
    <property type="taxonomic scope" value="Bacteria"/>
</dbReference>
<dbReference type="HOGENOM" id="CLU_097887_1_1_6"/>
<dbReference type="Proteomes" id="UP000001410">
    <property type="component" value="Chromosome"/>
</dbReference>
<dbReference type="GO" id="GO:0005886">
    <property type="term" value="C:plasma membrane"/>
    <property type="evidence" value="ECO:0007669"/>
    <property type="project" value="UniProtKB-SubCell"/>
</dbReference>
<dbReference type="HAMAP" id="MF_00143">
    <property type="entry name" value="UPF0114"/>
    <property type="match status" value="1"/>
</dbReference>
<dbReference type="InterPro" id="IPR005134">
    <property type="entry name" value="UPF0114"/>
</dbReference>
<dbReference type="InterPro" id="IPR020761">
    <property type="entry name" value="UPF0114_bac"/>
</dbReference>
<dbReference type="NCBIfam" id="TIGR00645">
    <property type="entry name" value="HI0507"/>
    <property type="match status" value="1"/>
</dbReference>
<dbReference type="PANTHER" id="PTHR38596">
    <property type="entry name" value="UPF0114 PROTEIN YQHA"/>
    <property type="match status" value="1"/>
</dbReference>
<dbReference type="PANTHER" id="PTHR38596:SF1">
    <property type="entry name" value="UPF0114 PROTEIN YQHA"/>
    <property type="match status" value="1"/>
</dbReference>
<dbReference type="Pfam" id="PF03350">
    <property type="entry name" value="UPF0114"/>
    <property type="match status" value="1"/>
</dbReference>
<evidence type="ECO:0000255" key="1">
    <source>
        <dbReference type="HAMAP-Rule" id="MF_00143"/>
    </source>
</evidence>
<evidence type="ECO:0000305" key="2"/>
<protein>
    <recommendedName>
        <fullName evidence="1">UPF0114 protein YqhA</fullName>
    </recommendedName>
</protein>
<accession>Q8FDL6</accession>